<evidence type="ECO:0000250" key="1"/>
<evidence type="ECO:0000250" key="2">
    <source>
        <dbReference type="UniProtKB" id="Q7WG29"/>
    </source>
</evidence>
<evidence type="ECO:0000305" key="3"/>
<accession>P9WMV3</accession>
<accession>L0T2I2</accession>
<accession>O53636</accession>
<organism>
    <name type="scientific">Mycobacterium tuberculosis (strain ATCC 25618 / H37Rv)</name>
    <dbReference type="NCBI Taxonomy" id="83332"/>
    <lineage>
        <taxon>Bacteria</taxon>
        <taxon>Bacillati</taxon>
        <taxon>Actinomycetota</taxon>
        <taxon>Actinomycetes</taxon>
        <taxon>Mycobacteriales</taxon>
        <taxon>Mycobacteriaceae</taxon>
        <taxon>Mycobacterium</taxon>
        <taxon>Mycobacterium tuberculosis complex</taxon>
    </lineage>
</organism>
<keyword id="KW-0119">Carbohydrate metabolism</keyword>
<keyword id="KW-0963">Cytoplasm</keyword>
<keyword id="KW-0378">Hydrolase</keyword>
<keyword id="KW-0460">Magnesium</keyword>
<keyword id="KW-0479">Metal-binding</keyword>
<keyword id="KW-1185">Reference proteome</keyword>
<keyword id="KW-0862">Zinc</keyword>
<feature type="chain" id="PRO_0000209397" description="D-glycero-alpha-D-manno-heptose-1,7-bisphosphate 7-phosphatase">
    <location>
        <begin position="1"/>
        <end position="190"/>
    </location>
</feature>
<feature type="active site" description="Nucleophile" evidence="1">
    <location>
        <position position="15"/>
    </location>
</feature>
<feature type="active site" description="Proton donor" evidence="1">
    <location>
        <position position="17"/>
    </location>
</feature>
<feature type="binding site" evidence="1">
    <location>
        <begin position="15"/>
        <end position="17"/>
    </location>
    <ligand>
        <name>substrate</name>
    </ligand>
</feature>
<feature type="binding site" evidence="2">
    <location>
        <position position="15"/>
    </location>
    <ligand>
        <name>Mg(2+)</name>
        <dbReference type="ChEBI" id="CHEBI:18420"/>
    </ligand>
</feature>
<feature type="binding site" evidence="2">
    <location>
        <position position="17"/>
    </location>
    <ligand>
        <name>Mg(2+)</name>
        <dbReference type="ChEBI" id="CHEBI:18420"/>
    </ligand>
</feature>
<feature type="binding site" evidence="1">
    <location>
        <begin position="23"/>
        <end position="28"/>
    </location>
    <ligand>
        <name>substrate</name>
    </ligand>
</feature>
<feature type="binding site" evidence="1">
    <location>
        <begin position="59"/>
        <end position="62"/>
    </location>
    <ligand>
        <name>substrate</name>
    </ligand>
</feature>
<feature type="binding site" evidence="2">
    <location>
        <position position="98"/>
    </location>
    <ligand>
        <name>Zn(2+)</name>
        <dbReference type="ChEBI" id="CHEBI:29105"/>
    </ligand>
</feature>
<feature type="binding site" evidence="2">
    <location>
        <position position="100"/>
    </location>
    <ligand>
        <name>Zn(2+)</name>
        <dbReference type="ChEBI" id="CHEBI:29105"/>
    </ligand>
</feature>
<feature type="binding site" evidence="2">
    <location>
        <position position="106"/>
    </location>
    <ligand>
        <name>Zn(2+)</name>
        <dbReference type="ChEBI" id="CHEBI:29105"/>
    </ligand>
</feature>
<feature type="binding site" evidence="2">
    <location>
        <position position="108"/>
    </location>
    <ligand>
        <name>Zn(2+)</name>
        <dbReference type="ChEBI" id="CHEBI:29105"/>
    </ligand>
</feature>
<feature type="binding site" evidence="1">
    <location>
        <begin position="109"/>
        <end position="110"/>
    </location>
    <ligand>
        <name>substrate</name>
    </ligand>
</feature>
<feature type="binding site" evidence="2">
    <location>
        <position position="136"/>
    </location>
    <ligand>
        <name>Mg(2+)</name>
        <dbReference type="ChEBI" id="CHEBI:18420"/>
    </ligand>
</feature>
<feature type="site" description="Stabilizes the phosphoryl group" evidence="1">
    <location>
        <position position="59"/>
    </location>
</feature>
<feature type="site" description="Contributes to substrate recognition" evidence="1">
    <location>
        <position position="109"/>
    </location>
</feature>
<feature type="site" description="Stabilizes the phosphoryl group" evidence="1">
    <location>
        <position position="110"/>
    </location>
</feature>
<dbReference type="EC" id="3.1.3.83"/>
<dbReference type="EMBL" id="AL123456">
    <property type="protein sequence ID" value="CCP42839.1"/>
    <property type="molecule type" value="Genomic_DNA"/>
</dbReference>
<dbReference type="PIR" id="E70840">
    <property type="entry name" value="E70840"/>
</dbReference>
<dbReference type="RefSeq" id="NP_214628.1">
    <property type="nucleotide sequence ID" value="NC_000962.3"/>
</dbReference>
<dbReference type="RefSeq" id="WP_003400840.1">
    <property type="nucleotide sequence ID" value="NZ_NVQJ01000062.1"/>
</dbReference>
<dbReference type="SMR" id="P9WMV3"/>
<dbReference type="FunCoup" id="P9WMV3">
    <property type="interactions" value="33"/>
</dbReference>
<dbReference type="STRING" id="83332.Rv0114"/>
<dbReference type="PaxDb" id="83332-Rv0114"/>
<dbReference type="DNASU" id="886903"/>
<dbReference type="GeneID" id="45424079"/>
<dbReference type="GeneID" id="886903"/>
<dbReference type="KEGG" id="mtu:Rv0114"/>
<dbReference type="KEGG" id="mtv:RVBD_0114"/>
<dbReference type="TubercuList" id="Rv0114"/>
<dbReference type="eggNOG" id="COG0241">
    <property type="taxonomic scope" value="Bacteria"/>
</dbReference>
<dbReference type="InParanoid" id="P9WMV3"/>
<dbReference type="OrthoDB" id="9781367at2"/>
<dbReference type="PhylomeDB" id="P9WMV3"/>
<dbReference type="SABIO-RK" id="P9WMV3"/>
<dbReference type="UniPathway" id="UPA00543">
    <property type="reaction ID" value="UER00607"/>
</dbReference>
<dbReference type="Proteomes" id="UP000001584">
    <property type="component" value="Chromosome"/>
</dbReference>
<dbReference type="GO" id="GO:0005737">
    <property type="term" value="C:cytoplasm"/>
    <property type="evidence" value="ECO:0007669"/>
    <property type="project" value="UniProtKB-SubCell"/>
</dbReference>
<dbReference type="GO" id="GO:0034200">
    <property type="term" value="F:D-glycero-beta-D-manno-heptose 1,7-bisphosphate 7-phosphatase activity"/>
    <property type="evidence" value="ECO:0000250"/>
    <property type="project" value="UniProtKB"/>
</dbReference>
<dbReference type="GO" id="GO:0000287">
    <property type="term" value="F:magnesium ion binding"/>
    <property type="evidence" value="ECO:0000250"/>
    <property type="project" value="UniProtKB"/>
</dbReference>
<dbReference type="GO" id="GO:0008270">
    <property type="term" value="F:zinc ion binding"/>
    <property type="evidence" value="ECO:0000250"/>
    <property type="project" value="UniProtKB"/>
</dbReference>
<dbReference type="GO" id="GO:0005975">
    <property type="term" value="P:carbohydrate metabolic process"/>
    <property type="evidence" value="ECO:0007669"/>
    <property type="project" value="InterPro"/>
</dbReference>
<dbReference type="CDD" id="cd07503">
    <property type="entry name" value="HAD_HisB-N"/>
    <property type="match status" value="1"/>
</dbReference>
<dbReference type="Gene3D" id="3.40.50.1000">
    <property type="entry name" value="HAD superfamily/HAD-like"/>
    <property type="match status" value="1"/>
</dbReference>
<dbReference type="InterPro" id="IPR036412">
    <property type="entry name" value="HAD-like_sf"/>
</dbReference>
<dbReference type="InterPro" id="IPR006549">
    <property type="entry name" value="HAD-SF_hydro_IIIA"/>
</dbReference>
<dbReference type="InterPro" id="IPR023214">
    <property type="entry name" value="HAD_sf"/>
</dbReference>
<dbReference type="InterPro" id="IPR004446">
    <property type="entry name" value="Heptose_bisP_phosphatase"/>
</dbReference>
<dbReference type="InterPro" id="IPR006543">
    <property type="entry name" value="Histidinol-phos"/>
</dbReference>
<dbReference type="NCBIfam" id="TIGR01662">
    <property type="entry name" value="HAD-SF-IIIA"/>
    <property type="match status" value="1"/>
</dbReference>
<dbReference type="NCBIfam" id="TIGR01656">
    <property type="entry name" value="Histidinol-ppas"/>
    <property type="match status" value="1"/>
</dbReference>
<dbReference type="PANTHER" id="PTHR42891">
    <property type="entry name" value="D-GLYCERO-BETA-D-MANNO-HEPTOSE-1,7-BISPHOSPHATE 7-PHOSPHATASE"/>
    <property type="match status" value="1"/>
</dbReference>
<dbReference type="PANTHER" id="PTHR42891:SF1">
    <property type="entry name" value="D-GLYCERO-BETA-D-MANNO-HEPTOSE-1,7-BISPHOSPHATE 7-PHOSPHATASE"/>
    <property type="match status" value="1"/>
</dbReference>
<dbReference type="SUPFAM" id="SSF56784">
    <property type="entry name" value="HAD-like"/>
    <property type="match status" value="1"/>
</dbReference>
<proteinExistence type="inferred from homology"/>
<protein>
    <recommendedName>
        <fullName>D-glycero-alpha-D-manno-heptose-1,7-bisphosphate 7-phosphatase</fullName>
        <ecNumber>3.1.3.83</ecNumber>
    </recommendedName>
    <alternativeName>
        <fullName>D,D-heptose 1,7-bisphosphate phosphatase</fullName>
        <shortName>HBP phosphatase</shortName>
    </alternativeName>
</protein>
<gene>
    <name type="primary">gmhB</name>
    <name type="ordered locus">Rv0114</name>
    <name type="ORF">MTV031.08</name>
</gene>
<sequence>MVAERAGHQWCLFLDRDGVINRQVVGDYVRNWRQFEWLPGAARALKKLRAWAPYIVVVTNQQGVGAGLMSAVDVMVIHRHLQMQLASDGVLIDGFQVCPHHRSQRCGCRKPRPGLVLDWLGRHPDSEPLLSIVVGDSLSDLELAHNVAAAAGACASVQIGGASSGGVADASFDSLWEFAVAVGHARGERG</sequence>
<name>GMHBA_MYCTU</name>
<reference key="1">
    <citation type="journal article" date="1998" name="Nature">
        <title>Deciphering the biology of Mycobacterium tuberculosis from the complete genome sequence.</title>
        <authorList>
            <person name="Cole S.T."/>
            <person name="Brosch R."/>
            <person name="Parkhill J."/>
            <person name="Garnier T."/>
            <person name="Churcher C.M."/>
            <person name="Harris D.E."/>
            <person name="Gordon S.V."/>
            <person name="Eiglmeier K."/>
            <person name="Gas S."/>
            <person name="Barry C.E. III"/>
            <person name="Tekaia F."/>
            <person name="Badcock K."/>
            <person name="Basham D."/>
            <person name="Brown D."/>
            <person name="Chillingworth T."/>
            <person name="Connor R."/>
            <person name="Davies R.M."/>
            <person name="Devlin K."/>
            <person name="Feltwell T."/>
            <person name="Gentles S."/>
            <person name="Hamlin N."/>
            <person name="Holroyd S."/>
            <person name="Hornsby T."/>
            <person name="Jagels K."/>
            <person name="Krogh A."/>
            <person name="McLean J."/>
            <person name="Moule S."/>
            <person name="Murphy L.D."/>
            <person name="Oliver S."/>
            <person name="Osborne J."/>
            <person name="Quail M.A."/>
            <person name="Rajandream M.A."/>
            <person name="Rogers J."/>
            <person name="Rutter S."/>
            <person name="Seeger K."/>
            <person name="Skelton S."/>
            <person name="Squares S."/>
            <person name="Squares R."/>
            <person name="Sulston J.E."/>
            <person name="Taylor K."/>
            <person name="Whitehead S."/>
            <person name="Barrell B.G."/>
        </authorList>
    </citation>
    <scope>NUCLEOTIDE SEQUENCE [LARGE SCALE GENOMIC DNA]</scope>
    <source>
        <strain>ATCC 25618 / H37Rv</strain>
    </source>
</reference>
<reference key="2">
    <citation type="journal article" date="2002" name="Microbiology">
        <title>Novel pathways for biosynthesis of nucleotide-activated glycero-manno-heptose precursors of bacterial glycoproteins and cell surface polysaccharides.</title>
        <authorList>
            <person name="Valvano M.A."/>
            <person name="Messner P."/>
            <person name="Kosma P."/>
        </authorList>
    </citation>
    <scope>BIOSYNTHESIS OF NUCLEOTIDE-ACTIVATED GLYCERO-MANNO-HEPTOSE</scope>
</reference>
<comment type="function">
    <text evidence="1">Converts the D-glycero-alpha-D-manno-heptose 1,7-bisphosphate intermediate into D-glycero-alpha-D-manno-heptose 1-phosphate by removing the phosphate group at the C-7 position.</text>
</comment>
<comment type="catalytic activity">
    <reaction>
        <text>D-glycero-alpha-D-manno-heptose 1,7-bisphosphate + H2O = D-glycero-alpha-D-manno-heptose 1-phosphate + phosphate</text>
        <dbReference type="Rhea" id="RHEA:28522"/>
        <dbReference type="ChEBI" id="CHEBI:15377"/>
        <dbReference type="ChEBI" id="CHEBI:43474"/>
        <dbReference type="ChEBI" id="CHEBI:60207"/>
        <dbReference type="ChEBI" id="CHEBI:61574"/>
        <dbReference type="EC" id="3.1.3.83"/>
    </reaction>
</comment>
<comment type="cofactor">
    <cofactor evidence="1">
        <name>Mg(2+)</name>
        <dbReference type="ChEBI" id="CHEBI:18420"/>
    </cofactor>
</comment>
<comment type="cofactor">
    <cofactor evidence="1">
        <name>Zn(2+)</name>
        <dbReference type="ChEBI" id="CHEBI:29105"/>
    </cofactor>
</comment>
<comment type="pathway">
    <text>Nucleotide-sugar biosynthesis; GDP-D-glycero-alpha-D-manno-heptose biosynthesis; GDP-D-glycero-alpha-D-manno-heptose from D-glycero-alpha-D-manno-heptose 7-phosphate: step 2/3.</text>
</comment>
<comment type="subunit">
    <text evidence="1">Monomer.</text>
</comment>
<comment type="subcellular location">
    <subcellularLocation>
        <location evidence="1">Cytoplasm</location>
    </subcellularLocation>
</comment>
<comment type="similarity">
    <text evidence="3">Belongs to the GmhB family.</text>
</comment>
<comment type="caution">
    <text evidence="3">Was originally proposed to be fused with GmhA.</text>
</comment>